<accession>P75546</accession>
<gene>
    <name evidence="1" type="primary">rpsL</name>
    <name type="ordered locus">MPN_225</name>
    <name type="ORF">MP606</name>
</gene>
<dbReference type="EMBL" id="U00089">
    <property type="protein sequence ID" value="AAB96254.1"/>
    <property type="molecule type" value="Genomic_DNA"/>
</dbReference>
<dbReference type="PIR" id="S73932">
    <property type="entry name" value="S73932"/>
</dbReference>
<dbReference type="RefSeq" id="NP_109913.1">
    <property type="nucleotide sequence ID" value="NC_000912.1"/>
</dbReference>
<dbReference type="RefSeq" id="WP_010874582.1">
    <property type="nucleotide sequence ID" value="NC_000912.1"/>
</dbReference>
<dbReference type="PDB" id="7OOC">
    <property type="method" value="EM"/>
    <property type="resolution" value="3.70 A"/>
    <property type="chains" value="K=1-139"/>
</dbReference>
<dbReference type="PDB" id="7P6Z">
    <property type="method" value="EM"/>
    <property type="resolution" value="3.50 A"/>
    <property type="chains" value="K=1-139"/>
</dbReference>
<dbReference type="PDB" id="7PAH">
    <property type="method" value="EM"/>
    <property type="resolution" value="9.50 A"/>
    <property type="chains" value="K=1-139"/>
</dbReference>
<dbReference type="PDB" id="7PAI">
    <property type="method" value="EM"/>
    <property type="resolution" value="6.70 A"/>
    <property type="chains" value="K=1-139"/>
</dbReference>
<dbReference type="PDB" id="7PAJ">
    <property type="method" value="EM"/>
    <property type="resolution" value="7.30 A"/>
    <property type="chains" value="K=1-139"/>
</dbReference>
<dbReference type="PDB" id="7PAK">
    <property type="method" value="EM"/>
    <property type="resolution" value="5.30 A"/>
    <property type="chains" value="K=1-139"/>
</dbReference>
<dbReference type="PDB" id="7PAL">
    <property type="method" value="EM"/>
    <property type="resolution" value="4.70 A"/>
    <property type="chains" value="K=1-139"/>
</dbReference>
<dbReference type="PDB" id="7PAM">
    <property type="method" value="EM"/>
    <property type="resolution" value="6.80 A"/>
    <property type="chains" value="K=1-139"/>
</dbReference>
<dbReference type="PDB" id="7PAN">
    <property type="method" value="EM"/>
    <property type="resolution" value="9.70 A"/>
    <property type="chains" value="K=1-139"/>
</dbReference>
<dbReference type="PDB" id="7PAO">
    <property type="method" value="EM"/>
    <property type="resolution" value="7.00 A"/>
    <property type="chains" value="K=1-139"/>
</dbReference>
<dbReference type="PDB" id="7PAQ">
    <property type="method" value="EM"/>
    <property type="resolution" value="8.90 A"/>
    <property type="chains" value="K=1-139"/>
</dbReference>
<dbReference type="PDB" id="7PAR">
    <property type="method" value="EM"/>
    <property type="resolution" value="8.20 A"/>
    <property type="chains" value="K=1-139"/>
</dbReference>
<dbReference type="PDB" id="7PAS">
    <property type="method" value="EM"/>
    <property type="resolution" value="16.00 A"/>
    <property type="chains" value="K=1-139"/>
</dbReference>
<dbReference type="PDB" id="7PH9">
    <property type="method" value="EM"/>
    <property type="resolution" value="8.70 A"/>
    <property type="chains" value="K=1-139"/>
</dbReference>
<dbReference type="PDB" id="7PHA">
    <property type="method" value="EM"/>
    <property type="resolution" value="8.50 A"/>
    <property type="chains" value="K=1-139"/>
</dbReference>
<dbReference type="PDB" id="7PHB">
    <property type="method" value="EM"/>
    <property type="resolution" value="4.90 A"/>
    <property type="chains" value="K=1-139"/>
</dbReference>
<dbReference type="PDB" id="7PHC">
    <property type="method" value="EM"/>
    <property type="resolution" value="9.90 A"/>
    <property type="chains" value="K=1-139"/>
</dbReference>
<dbReference type="PDB" id="7PI8">
    <property type="method" value="EM"/>
    <property type="resolution" value="8.90 A"/>
    <property type="chains" value="K=1-139"/>
</dbReference>
<dbReference type="PDB" id="7PI9">
    <property type="method" value="EM"/>
    <property type="resolution" value="6.30 A"/>
    <property type="chains" value="K=1-139"/>
</dbReference>
<dbReference type="PDB" id="7PIA">
    <property type="method" value="EM"/>
    <property type="resolution" value="13.60 A"/>
    <property type="chains" value="K=1-139"/>
</dbReference>
<dbReference type="PDB" id="7PIB">
    <property type="method" value="EM"/>
    <property type="resolution" value="4.70 A"/>
    <property type="chains" value="K=1-139"/>
</dbReference>
<dbReference type="PDB" id="7PIC">
    <property type="method" value="EM"/>
    <property type="resolution" value="9.10 A"/>
    <property type="chains" value="K=1-139"/>
</dbReference>
<dbReference type="PDB" id="7PIO">
    <property type="method" value="EM"/>
    <property type="resolution" value="9.50 A"/>
    <property type="chains" value="K=1-139"/>
</dbReference>
<dbReference type="PDB" id="7PIP">
    <property type="method" value="EM"/>
    <property type="resolution" value="9.30 A"/>
    <property type="chains" value="K=1-139"/>
</dbReference>
<dbReference type="PDB" id="7PIQ">
    <property type="method" value="EM"/>
    <property type="resolution" value="9.70 A"/>
    <property type="chains" value="K=1-139"/>
</dbReference>
<dbReference type="PDB" id="7PIR">
    <property type="method" value="EM"/>
    <property type="resolution" value="12.10 A"/>
    <property type="chains" value="K=1-139"/>
</dbReference>
<dbReference type="PDB" id="7PIS">
    <property type="method" value="EM"/>
    <property type="resolution" value="15.00 A"/>
    <property type="chains" value="K=1-139"/>
</dbReference>
<dbReference type="PDB" id="7PIT">
    <property type="method" value="EM"/>
    <property type="resolution" value="5.70 A"/>
    <property type="chains" value="K=1-139"/>
</dbReference>
<dbReference type="PDB" id="8P6P">
    <property type="method" value="EM"/>
    <property type="resolution" value="3.20 A"/>
    <property type="chains" value="K=1-139"/>
</dbReference>
<dbReference type="PDB" id="8P7X">
    <property type="method" value="EM"/>
    <property type="resolution" value="3.03 A"/>
    <property type="chains" value="K=1-139"/>
</dbReference>
<dbReference type="PDB" id="8P7Y">
    <property type="method" value="EM"/>
    <property type="resolution" value="3.70 A"/>
    <property type="chains" value="K=1-139"/>
</dbReference>
<dbReference type="PDB" id="8P8V">
    <property type="method" value="EM"/>
    <property type="resolution" value="8.70 A"/>
    <property type="chains" value="K=1-139"/>
</dbReference>
<dbReference type="PDB" id="8P8W">
    <property type="method" value="EM"/>
    <property type="resolution" value="8.70 A"/>
    <property type="chains" value="K=1-139"/>
</dbReference>
<dbReference type="PDBsum" id="7OOC"/>
<dbReference type="PDBsum" id="7P6Z"/>
<dbReference type="PDBsum" id="7PAH"/>
<dbReference type="PDBsum" id="7PAI"/>
<dbReference type="PDBsum" id="7PAJ"/>
<dbReference type="PDBsum" id="7PAK"/>
<dbReference type="PDBsum" id="7PAL"/>
<dbReference type="PDBsum" id="7PAM"/>
<dbReference type="PDBsum" id="7PAN"/>
<dbReference type="PDBsum" id="7PAO"/>
<dbReference type="PDBsum" id="7PAQ"/>
<dbReference type="PDBsum" id="7PAR"/>
<dbReference type="PDBsum" id="7PAS"/>
<dbReference type="PDBsum" id="7PH9"/>
<dbReference type="PDBsum" id="7PHA"/>
<dbReference type="PDBsum" id="7PHB"/>
<dbReference type="PDBsum" id="7PHC"/>
<dbReference type="PDBsum" id="7PI8"/>
<dbReference type="PDBsum" id="7PI9"/>
<dbReference type="PDBsum" id="7PIA"/>
<dbReference type="PDBsum" id="7PIB"/>
<dbReference type="PDBsum" id="7PIC"/>
<dbReference type="PDBsum" id="7PIO"/>
<dbReference type="PDBsum" id="7PIP"/>
<dbReference type="PDBsum" id="7PIQ"/>
<dbReference type="PDBsum" id="7PIR"/>
<dbReference type="PDBsum" id="7PIS"/>
<dbReference type="PDBsum" id="7PIT"/>
<dbReference type="PDBsum" id="8P6P"/>
<dbReference type="PDBsum" id="8P7X"/>
<dbReference type="PDBsum" id="8P7Y"/>
<dbReference type="PDBsum" id="8P8V"/>
<dbReference type="PDBsum" id="8P8W"/>
<dbReference type="EMDB" id="EMD-13234"/>
<dbReference type="EMDB" id="EMD-13272"/>
<dbReference type="EMDB" id="EMD-13273"/>
<dbReference type="EMDB" id="EMD-13274"/>
<dbReference type="EMDB" id="EMD-13275"/>
<dbReference type="EMDB" id="EMD-13276"/>
<dbReference type="EMDB" id="EMD-13277"/>
<dbReference type="EMDB" id="EMD-13278"/>
<dbReference type="EMDB" id="EMD-13279"/>
<dbReference type="EMDB" id="EMD-13280"/>
<dbReference type="EMDB" id="EMD-13281"/>
<dbReference type="EMDB" id="EMD-13282"/>
<dbReference type="EMDB" id="EMD-13410"/>
<dbReference type="EMDB" id="EMD-13411"/>
<dbReference type="EMDB" id="EMD-13412"/>
<dbReference type="EMDB" id="EMD-13413"/>
<dbReference type="EMDB" id="EMD-13432"/>
<dbReference type="EMDB" id="EMD-13433"/>
<dbReference type="EMDB" id="EMD-13434"/>
<dbReference type="EMDB" id="EMD-13435"/>
<dbReference type="EMDB" id="EMD-13436"/>
<dbReference type="EMDB" id="EMD-13445"/>
<dbReference type="EMDB" id="EMD-13446"/>
<dbReference type="EMDB" id="EMD-13447"/>
<dbReference type="EMDB" id="EMD-13448"/>
<dbReference type="EMDB" id="EMD-13449"/>
<dbReference type="EMDB" id="EMD-13450"/>
<dbReference type="SMR" id="P75546"/>
<dbReference type="IntAct" id="P75546">
    <property type="interactions" value="6"/>
</dbReference>
<dbReference type="STRING" id="272634.MPN_225"/>
<dbReference type="EnsemblBacteria" id="AAB96254">
    <property type="protein sequence ID" value="AAB96254"/>
    <property type="gene ID" value="MPN_225"/>
</dbReference>
<dbReference type="KEGG" id="mpn:MPN_225"/>
<dbReference type="PATRIC" id="fig|272634.6.peg.244"/>
<dbReference type="HOGENOM" id="CLU_104295_1_2_14"/>
<dbReference type="OrthoDB" id="9802366at2"/>
<dbReference type="BioCyc" id="MPNE272634:G1GJ3-361-MONOMER"/>
<dbReference type="Proteomes" id="UP000000808">
    <property type="component" value="Chromosome"/>
</dbReference>
<dbReference type="GO" id="GO:0015935">
    <property type="term" value="C:small ribosomal subunit"/>
    <property type="evidence" value="ECO:0007669"/>
    <property type="project" value="InterPro"/>
</dbReference>
<dbReference type="GO" id="GO:0019843">
    <property type="term" value="F:rRNA binding"/>
    <property type="evidence" value="ECO:0007669"/>
    <property type="project" value="UniProtKB-UniRule"/>
</dbReference>
<dbReference type="GO" id="GO:0003735">
    <property type="term" value="F:structural constituent of ribosome"/>
    <property type="evidence" value="ECO:0007669"/>
    <property type="project" value="InterPro"/>
</dbReference>
<dbReference type="GO" id="GO:0000049">
    <property type="term" value="F:tRNA binding"/>
    <property type="evidence" value="ECO:0007669"/>
    <property type="project" value="UniProtKB-UniRule"/>
</dbReference>
<dbReference type="GO" id="GO:0006412">
    <property type="term" value="P:translation"/>
    <property type="evidence" value="ECO:0007669"/>
    <property type="project" value="UniProtKB-UniRule"/>
</dbReference>
<dbReference type="CDD" id="cd03368">
    <property type="entry name" value="Ribosomal_S12"/>
    <property type="match status" value="1"/>
</dbReference>
<dbReference type="FunFam" id="2.40.50.140:FF:000001">
    <property type="entry name" value="30S ribosomal protein S12"/>
    <property type="match status" value="1"/>
</dbReference>
<dbReference type="Gene3D" id="2.40.50.140">
    <property type="entry name" value="Nucleic acid-binding proteins"/>
    <property type="match status" value="1"/>
</dbReference>
<dbReference type="HAMAP" id="MF_00403_B">
    <property type="entry name" value="Ribosomal_uS12_B"/>
    <property type="match status" value="1"/>
</dbReference>
<dbReference type="InterPro" id="IPR012340">
    <property type="entry name" value="NA-bd_OB-fold"/>
</dbReference>
<dbReference type="InterPro" id="IPR006032">
    <property type="entry name" value="Ribosomal_uS12"/>
</dbReference>
<dbReference type="InterPro" id="IPR005679">
    <property type="entry name" value="Ribosomal_uS12_bac"/>
</dbReference>
<dbReference type="NCBIfam" id="TIGR00981">
    <property type="entry name" value="rpsL_bact"/>
    <property type="match status" value="1"/>
</dbReference>
<dbReference type="PANTHER" id="PTHR11652">
    <property type="entry name" value="30S RIBOSOMAL PROTEIN S12 FAMILY MEMBER"/>
    <property type="match status" value="1"/>
</dbReference>
<dbReference type="Pfam" id="PF00164">
    <property type="entry name" value="Ribosom_S12_S23"/>
    <property type="match status" value="1"/>
</dbReference>
<dbReference type="PIRSF" id="PIRSF002133">
    <property type="entry name" value="Ribosomal_S12/S23"/>
    <property type="match status" value="1"/>
</dbReference>
<dbReference type="PRINTS" id="PR01034">
    <property type="entry name" value="RIBOSOMALS12"/>
</dbReference>
<dbReference type="SUPFAM" id="SSF50249">
    <property type="entry name" value="Nucleic acid-binding proteins"/>
    <property type="match status" value="1"/>
</dbReference>
<dbReference type="PROSITE" id="PS00055">
    <property type="entry name" value="RIBOSOMAL_S12"/>
    <property type="match status" value="1"/>
</dbReference>
<comment type="function">
    <text evidence="1">With S4 and S5 plays an important role in translational accuracy.</text>
</comment>
<comment type="function">
    <text evidence="1">Interacts with and stabilizes bases of the 16S rRNA that are involved in tRNA selection in the A site and with the mRNA backbone. Located at the interface of the 30S and 50S subunits, it traverses the body of the 30S subunit contacting proteins on the other side and probably holding the rRNA structure together. The combined cluster of proteins S8, S12 and S17 appears to hold together the shoulder and platform of the 30S subunit.</text>
</comment>
<comment type="subunit">
    <text evidence="1">Part of the 30S ribosomal subunit. Contacts proteins S8 and S17. May interact with IF1 in the 30S initiation complex.</text>
</comment>
<comment type="similarity">
    <text evidence="1">Belongs to the universal ribosomal protein uS12 family.</text>
</comment>
<comment type="caution">
    <text evidence="2">Because the enzyme that would modify Asp-102 to 3-methylthioaspartic acid has not been found in the proteome of this organism, that modification is not predicted.</text>
</comment>
<evidence type="ECO:0000255" key="1">
    <source>
        <dbReference type="HAMAP-Rule" id="MF_00403"/>
    </source>
</evidence>
<evidence type="ECO:0000305" key="2"/>
<evidence type="ECO:0007829" key="3">
    <source>
        <dbReference type="PDB" id="8P6P"/>
    </source>
</evidence>
<proteinExistence type="evidence at protein level"/>
<protein>
    <recommendedName>
        <fullName evidence="1">Small ribosomal subunit protein uS12</fullName>
    </recommendedName>
    <alternativeName>
        <fullName evidence="2">30S ribosomal protein S12</fullName>
    </alternativeName>
</protein>
<feature type="chain" id="PRO_0000146268" description="Small ribosomal subunit protein uS12">
    <location>
        <begin position="1"/>
        <end position="139"/>
    </location>
</feature>
<feature type="helix" evidence="3">
    <location>
        <begin position="4"/>
        <end position="9"/>
    </location>
</feature>
<feature type="helix" evidence="3">
    <location>
        <begin position="22"/>
        <end position="25"/>
    </location>
</feature>
<feature type="strand" evidence="3">
    <location>
        <begin position="26"/>
        <end position="28"/>
    </location>
</feature>
<feature type="strand" evidence="3">
    <location>
        <begin position="30"/>
        <end position="32"/>
    </location>
</feature>
<feature type="strand" evidence="3">
    <location>
        <begin position="35"/>
        <end position="37"/>
    </location>
</feature>
<feature type="strand" evidence="3">
    <location>
        <begin position="43"/>
        <end position="53"/>
    </location>
</feature>
<feature type="strand" evidence="3">
    <location>
        <begin position="56"/>
        <end position="58"/>
    </location>
</feature>
<feature type="strand" evidence="3">
    <location>
        <begin position="63"/>
        <end position="73"/>
    </location>
</feature>
<feature type="strand" evidence="3">
    <location>
        <begin position="75"/>
        <end position="79"/>
    </location>
</feature>
<feature type="strand" evidence="3">
    <location>
        <begin position="82"/>
        <end position="84"/>
    </location>
</feature>
<feature type="strand" evidence="3">
    <location>
        <begin position="92"/>
        <end position="97"/>
    </location>
</feature>
<feature type="strand" evidence="3">
    <location>
        <begin position="101"/>
        <end position="103"/>
    </location>
</feature>
<feature type="strand" evidence="3">
    <location>
        <begin position="108"/>
        <end position="110"/>
    </location>
</feature>
<feature type="strand" evidence="3">
    <location>
        <begin position="112"/>
        <end position="117"/>
    </location>
</feature>
<feature type="helix" evidence="3">
    <location>
        <begin position="127"/>
        <end position="130"/>
    </location>
</feature>
<keyword id="KW-0002">3D-structure</keyword>
<keyword id="KW-1185">Reference proteome</keyword>
<keyword id="KW-0687">Ribonucleoprotein</keyword>
<keyword id="KW-0689">Ribosomal protein</keyword>
<keyword id="KW-0694">RNA-binding</keyword>
<keyword id="KW-0699">rRNA-binding</keyword>
<keyword id="KW-0820">tRNA-binding</keyword>
<organism>
    <name type="scientific">Mycoplasma pneumoniae (strain ATCC 29342 / M129 / Subtype 1)</name>
    <name type="common">Mycoplasmoides pneumoniae</name>
    <dbReference type="NCBI Taxonomy" id="272634"/>
    <lineage>
        <taxon>Bacteria</taxon>
        <taxon>Bacillati</taxon>
        <taxon>Mycoplasmatota</taxon>
        <taxon>Mycoplasmoidales</taxon>
        <taxon>Mycoplasmoidaceae</taxon>
        <taxon>Mycoplasmoides</taxon>
    </lineage>
</organism>
<name>RS12_MYCPN</name>
<reference key="1">
    <citation type="journal article" date="1996" name="Nucleic Acids Res.">
        <title>Complete sequence analysis of the genome of the bacterium Mycoplasma pneumoniae.</title>
        <authorList>
            <person name="Himmelreich R."/>
            <person name="Hilbert H."/>
            <person name="Plagens H."/>
            <person name="Pirkl E."/>
            <person name="Li B.-C."/>
            <person name="Herrmann R."/>
        </authorList>
    </citation>
    <scope>NUCLEOTIDE SEQUENCE [LARGE SCALE GENOMIC DNA]</scope>
    <source>
        <strain>ATCC 29342 / M129 / Subtype 1</strain>
    </source>
</reference>
<sequence length="139" mass="15629">MATIAQLIRKPRKKKKVKSKSPALHYNLNLLNKKVTNVYSPLKRGVCTRVGTMTPKKPNSALRKYAKVRLTNGFEVLTYIPGEGHNLQEHSVTLLRGGRVKDLPGVRYHIVRGTLDTVGVEKRRQQRSAYGAKKPKAKS</sequence>